<reference key="1">
    <citation type="submission" date="2007-08" db="EMBL/GenBank/DDBJ databases">
        <authorList>
            <consortium name="The Citrobacter koseri Genome Sequencing Project"/>
            <person name="McClelland M."/>
            <person name="Sanderson E.K."/>
            <person name="Porwollik S."/>
            <person name="Spieth J."/>
            <person name="Clifton W.S."/>
            <person name="Latreille P."/>
            <person name="Courtney L."/>
            <person name="Wang C."/>
            <person name="Pepin K."/>
            <person name="Bhonagiri V."/>
            <person name="Nash W."/>
            <person name="Johnson M."/>
            <person name="Thiruvilangam P."/>
            <person name="Wilson R."/>
        </authorList>
    </citation>
    <scope>NUCLEOTIDE SEQUENCE [LARGE SCALE GENOMIC DNA]</scope>
    <source>
        <strain>ATCC BAA-895 / CDC 4225-83 / SGSC4696</strain>
    </source>
</reference>
<keyword id="KW-0050">Antiport</keyword>
<keyword id="KW-0997">Cell inner membrane</keyword>
<keyword id="KW-1003">Cell membrane</keyword>
<keyword id="KW-0406">Ion transport</keyword>
<keyword id="KW-0472">Membrane</keyword>
<keyword id="KW-1185">Reference proteome</keyword>
<keyword id="KW-0915">Sodium</keyword>
<keyword id="KW-0739">Sodium transport</keyword>
<keyword id="KW-0812">Transmembrane</keyword>
<keyword id="KW-1133">Transmembrane helix</keyword>
<keyword id="KW-0813">Transport</keyword>
<accession>A8AFR5</accession>
<feature type="chain" id="PRO_0000333085" description="Na(+)/H(+) antiporter NhaB">
    <location>
        <begin position="1"/>
        <end position="514"/>
    </location>
</feature>
<feature type="transmembrane region" description="Helical" evidence="1">
    <location>
        <begin position="23"/>
        <end position="43"/>
    </location>
</feature>
<feature type="transmembrane region" description="Helical" evidence="1">
    <location>
        <begin position="63"/>
        <end position="83"/>
    </location>
</feature>
<feature type="transmembrane region" description="Helical" evidence="1">
    <location>
        <begin position="97"/>
        <end position="117"/>
    </location>
</feature>
<feature type="transmembrane region" description="Helical" evidence="1">
    <location>
        <begin position="120"/>
        <end position="140"/>
    </location>
</feature>
<feature type="transmembrane region" description="Helical" evidence="1">
    <location>
        <begin position="144"/>
        <end position="164"/>
    </location>
</feature>
<feature type="transmembrane region" description="Helical" evidence="1">
    <location>
        <begin position="202"/>
        <end position="222"/>
    </location>
</feature>
<feature type="transmembrane region" description="Helical" evidence="1">
    <location>
        <begin position="238"/>
        <end position="258"/>
    </location>
</feature>
<feature type="transmembrane region" description="Helical" evidence="1">
    <location>
        <begin position="303"/>
        <end position="323"/>
    </location>
</feature>
<feature type="transmembrane region" description="Helical" evidence="1">
    <location>
        <begin position="357"/>
        <end position="377"/>
    </location>
</feature>
<feature type="transmembrane region" description="Helical" evidence="1">
    <location>
        <begin position="391"/>
        <end position="411"/>
    </location>
</feature>
<feature type="transmembrane region" description="Helical" evidence="1">
    <location>
        <begin position="447"/>
        <end position="467"/>
    </location>
</feature>
<feature type="transmembrane region" description="Helical" evidence="1">
    <location>
        <begin position="475"/>
        <end position="495"/>
    </location>
</feature>
<evidence type="ECO:0000255" key="1">
    <source>
        <dbReference type="HAMAP-Rule" id="MF_01599"/>
    </source>
</evidence>
<gene>
    <name evidence="1" type="primary">nhaB</name>
    <name type="ordered locus">CKO_01188</name>
</gene>
<protein>
    <recommendedName>
        <fullName evidence="1">Na(+)/H(+) antiporter NhaB</fullName>
    </recommendedName>
    <alternativeName>
        <fullName evidence="1">Sodium/proton antiporter NhaB</fullName>
    </alternativeName>
</protein>
<organism>
    <name type="scientific">Citrobacter koseri (strain ATCC BAA-895 / CDC 4225-83 / SGSC4696)</name>
    <dbReference type="NCBI Taxonomy" id="290338"/>
    <lineage>
        <taxon>Bacteria</taxon>
        <taxon>Pseudomonadati</taxon>
        <taxon>Pseudomonadota</taxon>
        <taxon>Gammaproteobacteria</taxon>
        <taxon>Enterobacterales</taxon>
        <taxon>Enterobacteriaceae</taxon>
        <taxon>Citrobacter</taxon>
    </lineage>
</organism>
<comment type="function">
    <text evidence="1">Na(+)/H(+) antiporter that extrudes sodium in exchange for external protons.</text>
</comment>
<comment type="catalytic activity">
    <reaction evidence="1">
        <text>2 Na(+)(in) + 3 H(+)(out) = 2 Na(+)(out) + 3 H(+)(in)</text>
        <dbReference type="Rhea" id="RHEA:29247"/>
        <dbReference type="ChEBI" id="CHEBI:15378"/>
        <dbReference type="ChEBI" id="CHEBI:29101"/>
    </reaction>
    <physiologicalReaction direction="left-to-right" evidence="1">
        <dbReference type="Rhea" id="RHEA:29248"/>
    </physiologicalReaction>
</comment>
<comment type="subcellular location">
    <subcellularLocation>
        <location evidence="1">Cell inner membrane</location>
        <topology evidence="1">Multi-pass membrane protein</topology>
    </subcellularLocation>
</comment>
<comment type="similarity">
    <text evidence="1">Belongs to the NhaB Na(+)/H(+) (TC 2.A.34) antiporter family.</text>
</comment>
<dbReference type="EMBL" id="CP000822">
    <property type="protein sequence ID" value="ABV12328.1"/>
    <property type="molecule type" value="Genomic_DNA"/>
</dbReference>
<dbReference type="RefSeq" id="WP_012132080.1">
    <property type="nucleotide sequence ID" value="NC_009792.1"/>
</dbReference>
<dbReference type="SMR" id="A8AFR5"/>
<dbReference type="STRING" id="290338.CKO_01188"/>
<dbReference type="GeneID" id="45135319"/>
<dbReference type="KEGG" id="cko:CKO_01188"/>
<dbReference type="HOGENOM" id="CLU_041110_0_0_6"/>
<dbReference type="OrthoDB" id="5288732at2"/>
<dbReference type="Proteomes" id="UP000008148">
    <property type="component" value="Chromosome"/>
</dbReference>
<dbReference type="GO" id="GO:0005886">
    <property type="term" value="C:plasma membrane"/>
    <property type="evidence" value="ECO:0007669"/>
    <property type="project" value="UniProtKB-SubCell"/>
</dbReference>
<dbReference type="GO" id="GO:0015385">
    <property type="term" value="F:sodium:proton antiporter activity"/>
    <property type="evidence" value="ECO:0007669"/>
    <property type="project" value="InterPro"/>
</dbReference>
<dbReference type="HAMAP" id="MF_01599">
    <property type="entry name" value="NhaB"/>
    <property type="match status" value="1"/>
</dbReference>
<dbReference type="InterPro" id="IPR004671">
    <property type="entry name" value="Na+/H+_antiporter_NhaB"/>
</dbReference>
<dbReference type="NCBIfam" id="TIGR00774">
    <property type="entry name" value="NhaB"/>
    <property type="match status" value="1"/>
</dbReference>
<dbReference type="NCBIfam" id="NF007093">
    <property type="entry name" value="PRK09547.1"/>
    <property type="match status" value="1"/>
</dbReference>
<dbReference type="PANTHER" id="PTHR43302:SF1">
    <property type="entry name" value="NA(+)_H(+) ANTIPORTER NHAB"/>
    <property type="match status" value="1"/>
</dbReference>
<dbReference type="PANTHER" id="PTHR43302">
    <property type="entry name" value="TRANSPORTER ARSB-RELATED"/>
    <property type="match status" value="1"/>
</dbReference>
<dbReference type="Pfam" id="PF06450">
    <property type="entry name" value="NhaB"/>
    <property type="match status" value="1"/>
</dbReference>
<proteinExistence type="inferred from homology"/>
<sequence length="514" mass="56699">MELSWGRAFWRNFLGQSPDWYKLALIAFLIANPLIFFINPFVAGWLLVAEFIFTLAMALKCYPLLPGGLLAIEAVIIGMTSAAHVREEVAANLEVLLLLMFMVAGIYFMKQLLLFIFTRLLLSIRSKMLLSLAFCMAAAFLSAFLDALTVVAVVISVAVGFYGIYHRVASARGEENDLQDDDHLDQNSKAVLEQFRGFLRSLMMHAGVGTALGGVMTMVGEPQNLIIAKAAGWHFGDFFLRMSPVTVPVLICGLFTCVLVEKLRWFGYGETLPEKVRHILQEFDDQSRQRRTRQDKLNLFVQAIIGVWLVTALALHLAEVGLIGLSVIILATSLTGVTDEHAIGKAFTESLPFTALLTVFFSIVAVIIDQHLFAPIIQFVLQASEHAQLTLFYLFNGLLSSISDNVFVGTIYINEAKAAMESGAISMKQYELLAVAINTGTNLPSVATPNGQAAFLFLLTSALAPLIRLSYGRMVWMALPYTLVLTLVGLLCVEFTLTPITEWMTQSGWLATFS</sequence>
<name>NHAB_CITK8</name>